<reference key="1">
    <citation type="submission" date="2006-12" db="EMBL/GenBank/DDBJ databases">
        <title>Complete sequence of Mycobacterium vanbaalenii PYR-1.</title>
        <authorList>
            <consortium name="US DOE Joint Genome Institute"/>
            <person name="Copeland A."/>
            <person name="Lucas S."/>
            <person name="Lapidus A."/>
            <person name="Barry K."/>
            <person name="Detter J.C."/>
            <person name="Glavina del Rio T."/>
            <person name="Hammon N."/>
            <person name="Israni S."/>
            <person name="Dalin E."/>
            <person name="Tice H."/>
            <person name="Pitluck S."/>
            <person name="Singan V."/>
            <person name="Schmutz J."/>
            <person name="Larimer F."/>
            <person name="Land M."/>
            <person name="Hauser L."/>
            <person name="Kyrpides N."/>
            <person name="Anderson I.J."/>
            <person name="Miller C."/>
            <person name="Richardson P."/>
        </authorList>
    </citation>
    <scope>NUCLEOTIDE SEQUENCE [LARGE SCALE GENOMIC DNA]</scope>
    <source>
        <strain>DSM 7251 / JCM 13017 / BCRC 16820 / KCTC 9966 / NRRL B-24157 / PYR-1</strain>
    </source>
</reference>
<proteinExistence type="inferred from homology"/>
<accession>A1TFE0</accession>
<comment type="function">
    <text evidence="1">Part of the phosphoribosylformylglycinamidine synthase complex involved in the purines biosynthetic pathway. Catalyzes the ATP-dependent conversion of formylglycinamide ribonucleotide (FGAR) and glutamine to yield formylglycinamidine ribonucleotide (FGAM) and glutamate. The FGAM synthase complex is composed of three subunits. PurQ produces an ammonia molecule by converting glutamine to glutamate. PurL transfers the ammonia molecule to FGAR to form FGAM in an ATP-dependent manner. PurS interacts with PurQ and PurL and is thought to assist in the transfer of the ammonia molecule from PurQ to PurL.</text>
</comment>
<comment type="catalytic activity">
    <reaction evidence="1">
        <text>N(2)-formyl-N(1)-(5-phospho-beta-D-ribosyl)glycinamide + L-glutamine + ATP + H2O = 2-formamido-N(1)-(5-O-phospho-beta-D-ribosyl)acetamidine + L-glutamate + ADP + phosphate + H(+)</text>
        <dbReference type="Rhea" id="RHEA:17129"/>
        <dbReference type="ChEBI" id="CHEBI:15377"/>
        <dbReference type="ChEBI" id="CHEBI:15378"/>
        <dbReference type="ChEBI" id="CHEBI:29985"/>
        <dbReference type="ChEBI" id="CHEBI:30616"/>
        <dbReference type="ChEBI" id="CHEBI:43474"/>
        <dbReference type="ChEBI" id="CHEBI:58359"/>
        <dbReference type="ChEBI" id="CHEBI:147286"/>
        <dbReference type="ChEBI" id="CHEBI:147287"/>
        <dbReference type="ChEBI" id="CHEBI:456216"/>
        <dbReference type="EC" id="6.3.5.3"/>
    </reaction>
</comment>
<comment type="pathway">
    <text evidence="1">Purine metabolism; IMP biosynthesis via de novo pathway; 5-amino-1-(5-phospho-D-ribosyl)imidazole from N(2)-formyl-N(1)-(5-phospho-D-ribosyl)glycinamide: step 1/2.</text>
</comment>
<comment type="subunit">
    <text evidence="1">Monomer. Part of the FGAM synthase complex composed of 1 PurL, 1 PurQ and 2 PurS subunits.</text>
</comment>
<comment type="subcellular location">
    <subcellularLocation>
        <location evidence="1">Cytoplasm</location>
    </subcellularLocation>
</comment>
<comment type="similarity">
    <text evidence="1">Belongs to the FGAMS family.</text>
</comment>
<keyword id="KW-0067">ATP-binding</keyword>
<keyword id="KW-0963">Cytoplasm</keyword>
<keyword id="KW-0436">Ligase</keyword>
<keyword id="KW-0460">Magnesium</keyword>
<keyword id="KW-0479">Metal-binding</keyword>
<keyword id="KW-0547">Nucleotide-binding</keyword>
<keyword id="KW-0658">Purine biosynthesis</keyword>
<gene>
    <name evidence="1" type="primary">purL</name>
    <name type="ordered locus">Mvan_5119</name>
</gene>
<dbReference type="EC" id="6.3.5.3" evidence="1"/>
<dbReference type="EMBL" id="CP000511">
    <property type="protein sequence ID" value="ABM15890.1"/>
    <property type="molecule type" value="Genomic_DNA"/>
</dbReference>
<dbReference type="SMR" id="A1TFE0"/>
<dbReference type="STRING" id="350058.Mvan_5119"/>
<dbReference type="KEGG" id="mva:Mvan_5119"/>
<dbReference type="eggNOG" id="COG0046">
    <property type="taxonomic scope" value="Bacteria"/>
</dbReference>
<dbReference type="HOGENOM" id="CLU_003100_0_1_11"/>
<dbReference type="UniPathway" id="UPA00074">
    <property type="reaction ID" value="UER00128"/>
</dbReference>
<dbReference type="Proteomes" id="UP000009159">
    <property type="component" value="Chromosome"/>
</dbReference>
<dbReference type="GO" id="GO:0005737">
    <property type="term" value="C:cytoplasm"/>
    <property type="evidence" value="ECO:0007669"/>
    <property type="project" value="UniProtKB-SubCell"/>
</dbReference>
<dbReference type="GO" id="GO:0005524">
    <property type="term" value="F:ATP binding"/>
    <property type="evidence" value="ECO:0007669"/>
    <property type="project" value="UniProtKB-UniRule"/>
</dbReference>
<dbReference type="GO" id="GO:0000287">
    <property type="term" value="F:magnesium ion binding"/>
    <property type="evidence" value="ECO:0007669"/>
    <property type="project" value="UniProtKB-UniRule"/>
</dbReference>
<dbReference type="GO" id="GO:0004642">
    <property type="term" value="F:phosphoribosylformylglycinamidine synthase activity"/>
    <property type="evidence" value="ECO:0007669"/>
    <property type="project" value="UniProtKB-UniRule"/>
</dbReference>
<dbReference type="GO" id="GO:0006189">
    <property type="term" value="P:'de novo' IMP biosynthetic process"/>
    <property type="evidence" value="ECO:0007669"/>
    <property type="project" value="UniProtKB-UniRule"/>
</dbReference>
<dbReference type="CDD" id="cd02203">
    <property type="entry name" value="PurL_repeat1"/>
    <property type="match status" value="1"/>
</dbReference>
<dbReference type="CDD" id="cd02204">
    <property type="entry name" value="PurL_repeat2"/>
    <property type="match status" value="1"/>
</dbReference>
<dbReference type="FunFam" id="3.30.1330.10:FF:000004">
    <property type="entry name" value="Phosphoribosylformylglycinamidine synthase subunit PurL"/>
    <property type="match status" value="1"/>
</dbReference>
<dbReference type="Gene3D" id="3.90.650.10">
    <property type="entry name" value="PurM-like C-terminal domain"/>
    <property type="match status" value="2"/>
</dbReference>
<dbReference type="Gene3D" id="3.30.1330.10">
    <property type="entry name" value="PurM-like, N-terminal domain"/>
    <property type="match status" value="2"/>
</dbReference>
<dbReference type="HAMAP" id="MF_00420">
    <property type="entry name" value="PurL_2"/>
    <property type="match status" value="1"/>
</dbReference>
<dbReference type="InterPro" id="IPR010074">
    <property type="entry name" value="PRibForGlyAmidine_synth_PurL"/>
</dbReference>
<dbReference type="InterPro" id="IPR041609">
    <property type="entry name" value="PurL_linker"/>
</dbReference>
<dbReference type="InterPro" id="IPR010918">
    <property type="entry name" value="PurM-like_C_dom"/>
</dbReference>
<dbReference type="InterPro" id="IPR036676">
    <property type="entry name" value="PurM-like_C_sf"/>
</dbReference>
<dbReference type="InterPro" id="IPR016188">
    <property type="entry name" value="PurM-like_N"/>
</dbReference>
<dbReference type="InterPro" id="IPR036921">
    <property type="entry name" value="PurM-like_N_sf"/>
</dbReference>
<dbReference type="NCBIfam" id="TIGR01736">
    <property type="entry name" value="FGAM_synth_II"/>
    <property type="match status" value="1"/>
</dbReference>
<dbReference type="NCBIfam" id="NF002290">
    <property type="entry name" value="PRK01213.1"/>
    <property type="match status" value="1"/>
</dbReference>
<dbReference type="PANTHER" id="PTHR43555">
    <property type="entry name" value="PHOSPHORIBOSYLFORMYLGLYCINAMIDINE SYNTHASE SUBUNIT PURL"/>
    <property type="match status" value="1"/>
</dbReference>
<dbReference type="PANTHER" id="PTHR43555:SF1">
    <property type="entry name" value="PHOSPHORIBOSYLFORMYLGLYCINAMIDINE SYNTHASE SUBUNIT PURL"/>
    <property type="match status" value="1"/>
</dbReference>
<dbReference type="Pfam" id="PF00586">
    <property type="entry name" value="AIRS"/>
    <property type="match status" value="2"/>
</dbReference>
<dbReference type="Pfam" id="PF02769">
    <property type="entry name" value="AIRS_C"/>
    <property type="match status" value="2"/>
</dbReference>
<dbReference type="Pfam" id="PF18072">
    <property type="entry name" value="FGAR-AT_linker"/>
    <property type="match status" value="1"/>
</dbReference>
<dbReference type="PIRSF" id="PIRSF001587">
    <property type="entry name" value="FGAM_synthase_II"/>
    <property type="match status" value="1"/>
</dbReference>
<dbReference type="SUPFAM" id="SSF56042">
    <property type="entry name" value="PurM C-terminal domain-like"/>
    <property type="match status" value="2"/>
</dbReference>
<dbReference type="SUPFAM" id="SSF55326">
    <property type="entry name" value="PurM N-terminal domain-like"/>
    <property type="match status" value="2"/>
</dbReference>
<feature type="chain" id="PRO_1000050326" description="Phosphoribosylformylglycinamidine synthase subunit PurL">
    <location>
        <begin position="1"/>
        <end position="764"/>
    </location>
</feature>
<feature type="region of interest" description="Disordered" evidence="2">
    <location>
        <begin position="1"/>
        <end position="23"/>
    </location>
</feature>
<feature type="active site" evidence="1">
    <location>
        <position position="57"/>
    </location>
</feature>
<feature type="active site" description="Proton acceptor" evidence="1">
    <location>
        <position position="108"/>
    </location>
</feature>
<feature type="binding site" evidence="1">
    <location>
        <position position="60"/>
    </location>
    <ligand>
        <name>ATP</name>
        <dbReference type="ChEBI" id="CHEBI:30616"/>
    </ligand>
</feature>
<feature type="binding site" evidence="1">
    <location>
        <position position="104"/>
    </location>
    <ligand>
        <name>ATP</name>
        <dbReference type="ChEBI" id="CHEBI:30616"/>
    </ligand>
</feature>
<feature type="binding site" evidence="1">
    <location>
        <position position="106"/>
    </location>
    <ligand>
        <name>Mg(2+)</name>
        <dbReference type="ChEBI" id="CHEBI:18420"/>
        <label>1</label>
    </ligand>
</feature>
<feature type="binding site" evidence="1">
    <location>
        <begin position="107"/>
        <end position="110"/>
    </location>
    <ligand>
        <name>substrate</name>
    </ligand>
</feature>
<feature type="binding site" evidence="1">
    <location>
        <position position="129"/>
    </location>
    <ligand>
        <name>substrate</name>
    </ligand>
</feature>
<feature type="binding site" evidence="1">
    <location>
        <position position="130"/>
    </location>
    <ligand>
        <name>Mg(2+)</name>
        <dbReference type="ChEBI" id="CHEBI:18420"/>
        <label>2</label>
    </ligand>
</feature>
<feature type="binding site" evidence="1">
    <location>
        <position position="258"/>
    </location>
    <ligand>
        <name>substrate</name>
    </ligand>
</feature>
<feature type="binding site" evidence="1">
    <location>
        <position position="286"/>
    </location>
    <ligand>
        <name>Mg(2+)</name>
        <dbReference type="ChEBI" id="CHEBI:18420"/>
        <label>2</label>
    </ligand>
</feature>
<feature type="binding site" evidence="1">
    <location>
        <begin position="330"/>
        <end position="332"/>
    </location>
    <ligand>
        <name>substrate</name>
    </ligand>
</feature>
<feature type="binding site" evidence="1">
    <location>
        <position position="518"/>
    </location>
    <ligand>
        <name>ATP</name>
        <dbReference type="ChEBI" id="CHEBI:30616"/>
    </ligand>
</feature>
<feature type="binding site" evidence="1">
    <location>
        <position position="555"/>
    </location>
    <ligand>
        <name>ATP</name>
        <dbReference type="ChEBI" id="CHEBI:30616"/>
    </ligand>
</feature>
<feature type="binding site" evidence="1">
    <location>
        <position position="556"/>
    </location>
    <ligand>
        <name>Mg(2+)</name>
        <dbReference type="ChEBI" id="CHEBI:18420"/>
        <label>1</label>
    </ligand>
</feature>
<feature type="binding site" evidence="1">
    <location>
        <position position="558"/>
    </location>
    <ligand>
        <name>substrate</name>
    </ligand>
</feature>
<evidence type="ECO:0000255" key="1">
    <source>
        <dbReference type="HAMAP-Rule" id="MF_00420"/>
    </source>
</evidence>
<evidence type="ECO:0000256" key="2">
    <source>
        <dbReference type="SAM" id="MobiDB-lite"/>
    </source>
</evidence>
<protein>
    <recommendedName>
        <fullName evidence="1">Phosphoribosylformylglycinamidine synthase subunit PurL</fullName>
        <shortName evidence="1">FGAM synthase</shortName>
        <ecNumber evidence="1">6.3.5.3</ecNumber>
    </recommendedName>
    <alternativeName>
        <fullName evidence="1">Formylglycinamide ribonucleotide amidotransferase subunit II</fullName>
        <shortName evidence="1">FGAR amidotransferase II</shortName>
        <shortName evidence="1">FGAR-AT II</shortName>
    </alternativeName>
    <alternativeName>
        <fullName evidence="1">Glutamine amidotransferase PurL</fullName>
    </alternativeName>
    <alternativeName>
        <fullName evidence="1">Phosphoribosylformylglycinamidine synthase subunit II</fullName>
    </alternativeName>
</protein>
<organism>
    <name type="scientific">Mycolicibacterium vanbaalenii (strain DSM 7251 / JCM 13017 / BCRC 16820 / KCTC 9966 / NRRL B-24157 / PYR-1)</name>
    <name type="common">Mycobacterium vanbaalenii</name>
    <dbReference type="NCBI Taxonomy" id="350058"/>
    <lineage>
        <taxon>Bacteria</taxon>
        <taxon>Bacillati</taxon>
        <taxon>Actinomycetota</taxon>
        <taxon>Actinomycetes</taxon>
        <taxon>Mycobacteriales</taxon>
        <taxon>Mycobacteriaceae</taxon>
        <taxon>Mycolicibacterium</taxon>
    </lineage>
</organism>
<sequence length="764" mass="80715">MTQEVDTVERAAATPDHPQPYRELGLKDDEYERIREILGRRPTDAELAMYSVMWSEHCSYKSSKVHLRYFGETTTEKMRETMLAGIGENAGVVDIGDGWAATFKVESHNHPSYIEPYQGAATGVGGIVRDIMAMGARPVAVMDQLRFGAADAPDTRRVLDGVVRGIGGYGNSLGLPNIGGETVFDASYAGNPLVNALCVGVLRKEDLKLAFASGAGNKIILFGARTGLDGIGGVSVLASETFGGDESGAGRKKLPSVQVGDPFTEKVLIECCLELYAADLVVGIQDLGGAGLSCATSELASAGDGGMRVELERVPLRAANMTPAEILSSESQERMCAVVTPDNVDAFMAVCRKWDVLATDIGEVTDSGRLEITWHGETVVDVPPRTVAHEGPVYERPVQRPDSQDALVANTTASLERPSTGDELRATLLQLLGSPALCSRAFITEQYDRYVRGNTVLAEHADGGVLRVDEQTGRGIAISTDASGRYTALDPYAGAQLALAEAYRNVAVTGATPVAVTNCLNFGSPEDPGVMWQFSQAVRGLADGAAALGIPVTGGNVSFYNQTGTTAILPTPVVGVLGVIDDVKRRIPTGFGTEPGETLILLGDTRDEFDGSIWAQVTADHLGGVPPTVDLDRERLLAEVLTAASRDGLVSAAHDLSEGGLIQAVVEASLAGETGCRIVLPEGWNPFVTLFSESAGRVLVAVPRTEESRFTAMCEARGLPANRIGVVDQGPDGGEPAVEVQGLFTVTLEELRRTSEGVLPGLFG</sequence>
<name>PURL_MYCVP</name>